<geneLocation type="chloroplast"/>
<protein>
    <recommendedName>
        <fullName>Uncharacterized protein ORF62</fullName>
    </recommendedName>
</protein>
<reference key="1">
    <citation type="journal article" date="1995" name="Plant Mol. Biol. Rep.">
        <title>Complete nucleotide sequence of the Porphyra purpurea chloroplast genome.</title>
        <authorList>
            <person name="Reith M.E."/>
            <person name="Munholland J."/>
        </authorList>
    </citation>
    <scope>NUCLEOTIDE SEQUENCE [LARGE SCALE GENOMIC DNA]</scope>
    <source>
        <strain>Avonport</strain>
    </source>
</reference>
<comment type="subcellular location">
    <subcellularLocation>
        <location>Plastid</location>
        <location>Chloroplast</location>
    </subcellularLocation>
</comment>
<name>YCXA_PORPU</name>
<organism>
    <name type="scientific">Porphyra purpurea</name>
    <name type="common">Red seaweed</name>
    <name type="synonym">Ulva purpurea</name>
    <dbReference type="NCBI Taxonomy" id="2787"/>
    <lineage>
        <taxon>Eukaryota</taxon>
        <taxon>Rhodophyta</taxon>
        <taxon>Bangiophyceae</taxon>
        <taxon>Bangiales</taxon>
        <taxon>Bangiaceae</taxon>
        <taxon>Porphyra</taxon>
    </lineage>
</organism>
<proteinExistence type="predicted"/>
<keyword id="KW-0150">Chloroplast</keyword>
<keyword id="KW-0934">Plastid</keyword>
<accession>P51233</accession>
<dbReference type="EMBL" id="U38804">
    <property type="protein sequence ID" value="AAC08119.1"/>
    <property type="molecule type" value="Genomic_DNA"/>
</dbReference>
<dbReference type="PIR" id="S73154">
    <property type="entry name" value="S73154"/>
</dbReference>
<dbReference type="RefSeq" id="NP_053843.1">
    <property type="nucleotide sequence ID" value="NC_000925.1"/>
</dbReference>
<dbReference type="GeneID" id="809862"/>
<dbReference type="GO" id="GO:0009507">
    <property type="term" value="C:chloroplast"/>
    <property type="evidence" value="ECO:0007669"/>
    <property type="project" value="UniProtKB-SubCell"/>
</dbReference>
<feature type="chain" id="PRO_0000217476" description="Uncharacterized protein ORF62">
    <location>
        <begin position="1"/>
        <end position="62"/>
    </location>
</feature>
<sequence>MNNKIKLNFNYVLVIFFTTMVYTCKLNVHFKSELLNIREKYCNLIFDKKMAFIPMVSLKKNR</sequence>